<reference key="1">
    <citation type="journal article" date="2009" name="Stand. Genomic Sci.">
        <title>Complete genome sequence of Methanoculleus marisnigri Romesser et al. 1981 type strain JR1.</title>
        <authorList>
            <person name="Anderson I.J."/>
            <person name="Sieprawska-Lupa M."/>
            <person name="Lapidus A."/>
            <person name="Nolan M."/>
            <person name="Copeland A."/>
            <person name="Glavina Del Rio T."/>
            <person name="Tice H."/>
            <person name="Dalin E."/>
            <person name="Barry K."/>
            <person name="Saunders E."/>
            <person name="Han C."/>
            <person name="Brettin T."/>
            <person name="Detter J.C."/>
            <person name="Bruce D."/>
            <person name="Mikhailova N."/>
            <person name="Pitluck S."/>
            <person name="Hauser L."/>
            <person name="Land M."/>
            <person name="Lucas S."/>
            <person name="Richardson P."/>
            <person name="Whitman W.B."/>
            <person name="Kyrpides N.C."/>
        </authorList>
    </citation>
    <scope>NUCLEOTIDE SEQUENCE [LARGE SCALE GENOMIC DNA]</scope>
    <source>
        <strain>ATCC 35101 / DSM 1498 / JR1</strain>
    </source>
</reference>
<name>RL5_METMJ</name>
<sequence length="167" mass="18803">MTAMKDIYIDKVVVHMGVGESGERLVKAEDLVKQITGQKPVRTIAKRTQPAFGIRKGAPIGCKVTLRRENAEKFITTALDIIERRLAPSQFDRTGNVSFGIEEHTDFPGMSYDPTIGIYGMDVNVVLEYKGARIARRSVERRKLPADQKVNKEEAIAFMCENYRVEV</sequence>
<organism>
    <name type="scientific">Methanoculleus marisnigri (strain ATCC 35101 / DSM 1498 / JR1)</name>
    <dbReference type="NCBI Taxonomy" id="368407"/>
    <lineage>
        <taxon>Archaea</taxon>
        <taxon>Methanobacteriati</taxon>
        <taxon>Methanobacteriota</taxon>
        <taxon>Stenosarchaea group</taxon>
        <taxon>Methanomicrobia</taxon>
        <taxon>Methanomicrobiales</taxon>
        <taxon>Methanomicrobiaceae</taxon>
        <taxon>Methanoculleus</taxon>
    </lineage>
</organism>
<comment type="function">
    <text evidence="1">This is one of the proteins that bind and probably mediate the attachment of the 5S RNA into the large ribosomal subunit, where it forms part of the central protuberance. In the 70S ribosome it contacts protein S13 of the 30S subunit (bridge B1b), connecting the 2 subunits; this bridge is implicated in subunit movement. May contact the P site tRNA; the 5S rRNA and some of its associated proteins might help stabilize positioning of ribosome-bound tRNAs.</text>
</comment>
<comment type="subunit">
    <text evidence="1">Part of the 50S ribosomal subunit; contacts the 5S rRNA and probably tRNA. Forms a bridge to the 30S subunit in the 70S ribosome.</text>
</comment>
<comment type="similarity">
    <text evidence="1">Belongs to the universal ribosomal protein uL5 family.</text>
</comment>
<dbReference type="EMBL" id="CP000562">
    <property type="protein sequence ID" value="ABN56510.1"/>
    <property type="molecule type" value="Genomic_DNA"/>
</dbReference>
<dbReference type="RefSeq" id="WP_011843420.1">
    <property type="nucleotide sequence ID" value="NC_009051.1"/>
</dbReference>
<dbReference type="SMR" id="A3CT10"/>
<dbReference type="STRING" id="368407.Memar_0577"/>
<dbReference type="GeneID" id="4846351"/>
<dbReference type="KEGG" id="mem:Memar_0577"/>
<dbReference type="eggNOG" id="arCOG04092">
    <property type="taxonomic scope" value="Archaea"/>
</dbReference>
<dbReference type="HOGENOM" id="CLU_061015_3_0_2"/>
<dbReference type="OrthoDB" id="372044at2157"/>
<dbReference type="Proteomes" id="UP000002146">
    <property type="component" value="Chromosome"/>
</dbReference>
<dbReference type="GO" id="GO:1990904">
    <property type="term" value="C:ribonucleoprotein complex"/>
    <property type="evidence" value="ECO:0007669"/>
    <property type="project" value="UniProtKB-KW"/>
</dbReference>
<dbReference type="GO" id="GO:0005840">
    <property type="term" value="C:ribosome"/>
    <property type="evidence" value="ECO:0007669"/>
    <property type="project" value="UniProtKB-KW"/>
</dbReference>
<dbReference type="GO" id="GO:0019843">
    <property type="term" value="F:rRNA binding"/>
    <property type="evidence" value="ECO:0007669"/>
    <property type="project" value="UniProtKB-UniRule"/>
</dbReference>
<dbReference type="GO" id="GO:0003735">
    <property type="term" value="F:structural constituent of ribosome"/>
    <property type="evidence" value="ECO:0007669"/>
    <property type="project" value="InterPro"/>
</dbReference>
<dbReference type="GO" id="GO:0000049">
    <property type="term" value="F:tRNA binding"/>
    <property type="evidence" value="ECO:0007669"/>
    <property type="project" value="UniProtKB-UniRule"/>
</dbReference>
<dbReference type="GO" id="GO:0006412">
    <property type="term" value="P:translation"/>
    <property type="evidence" value="ECO:0007669"/>
    <property type="project" value="UniProtKB-UniRule"/>
</dbReference>
<dbReference type="FunFam" id="3.30.1440.10:FF:000002">
    <property type="entry name" value="60S ribosomal protein L11"/>
    <property type="match status" value="1"/>
</dbReference>
<dbReference type="Gene3D" id="3.30.1440.10">
    <property type="match status" value="1"/>
</dbReference>
<dbReference type="HAMAP" id="MF_01333_A">
    <property type="entry name" value="Ribosomal_uL5_A"/>
    <property type="match status" value="1"/>
</dbReference>
<dbReference type="InterPro" id="IPR002132">
    <property type="entry name" value="Ribosomal_uL5"/>
</dbReference>
<dbReference type="InterPro" id="IPR022804">
    <property type="entry name" value="Ribosomal_uL5_arc"/>
</dbReference>
<dbReference type="InterPro" id="IPR031309">
    <property type="entry name" value="Ribosomal_uL5_C"/>
</dbReference>
<dbReference type="InterPro" id="IPR020929">
    <property type="entry name" value="Ribosomal_uL5_CS"/>
</dbReference>
<dbReference type="InterPro" id="IPR022803">
    <property type="entry name" value="Ribosomal_uL5_dom_sf"/>
</dbReference>
<dbReference type="InterPro" id="IPR031310">
    <property type="entry name" value="Ribosomal_uL5_N"/>
</dbReference>
<dbReference type="NCBIfam" id="NF003258">
    <property type="entry name" value="PRK04219.1"/>
    <property type="match status" value="1"/>
</dbReference>
<dbReference type="PANTHER" id="PTHR11994">
    <property type="entry name" value="60S RIBOSOMAL PROTEIN L11-RELATED"/>
    <property type="match status" value="1"/>
</dbReference>
<dbReference type="Pfam" id="PF00281">
    <property type="entry name" value="Ribosomal_L5"/>
    <property type="match status" value="1"/>
</dbReference>
<dbReference type="Pfam" id="PF00673">
    <property type="entry name" value="Ribosomal_L5_C"/>
    <property type="match status" value="1"/>
</dbReference>
<dbReference type="PIRSF" id="PIRSF002161">
    <property type="entry name" value="Ribosomal_L5"/>
    <property type="match status" value="1"/>
</dbReference>
<dbReference type="SUPFAM" id="SSF55282">
    <property type="entry name" value="RL5-like"/>
    <property type="match status" value="1"/>
</dbReference>
<dbReference type="PROSITE" id="PS00358">
    <property type="entry name" value="RIBOSOMAL_L5"/>
    <property type="match status" value="1"/>
</dbReference>
<keyword id="KW-0687">Ribonucleoprotein</keyword>
<keyword id="KW-0689">Ribosomal protein</keyword>
<keyword id="KW-0694">RNA-binding</keyword>
<keyword id="KW-0699">rRNA-binding</keyword>
<keyword id="KW-0820">tRNA-binding</keyword>
<proteinExistence type="inferred from homology"/>
<protein>
    <recommendedName>
        <fullName evidence="1">Large ribosomal subunit protein uL5</fullName>
    </recommendedName>
    <alternativeName>
        <fullName evidence="2">50S ribosomal protein L5</fullName>
    </alternativeName>
</protein>
<accession>A3CT10</accession>
<gene>
    <name evidence="1" type="primary">rpl5</name>
    <name type="ordered locus">Memar_0577</name>
</gene>
<feature type="chain" id="PRO_0000365643" description="Large ribosomal subunit protein uL5">
    <location>
        <begin position="1"/>
        <end position="167"/>
    </location>
</feature>
<evidence type="ECO:0000255" key="1">
    <source>
        <dbReference type="HAMAP-Rule" id="MF_01333"/>
    </source>
</evidence>
<evidence type="ECO:0000305" key="2"/>